<protein>
    <recommendedName>
        <fullName>Glucan endo-1,3-beta-glucosidase, basic vacuolar isoform GLB</fullName>
        <ecNumber>3.2.1.39</ecNumber>
    </recommendedName>
    <alternativeName>
        <fullName>(1-&gt;3)-beta-glucan endohydrolase</fullName>
        <shortName>(1-&gt;3)-beta-glucanase</shortName>
    </alternativeName>
    <alternativeName>
        <fullName>Beta-1,3-endoglucanase, basic</fullName>
    </alternativeName>
    <alternativeName>
        <fullName>Glucanase GLB</fullName>
    </alternativeName>
</protein>
<dbReference type="EC" id="3.2.1.39"/>
<dbReference type="EMBL" id="M60403">
    <property type="protein sequence ID" value="AAA63540.1"/>
    <property type="molecule type" value="Genomic_DNA"/>
</dbReference>
<dbReference type="PIR" id="B39115">
    <property type="entry name" value="B39115"/>
</dbReference>
<dbReference type="RefSeq" id="NP_001412828.1">
    <property type="nucleotide sequence ID" value="NM_001425899.1"/>
</dbReference>
<dbReference type="RefSeq" id="XP_016479922.1">
    <property type="nucleotide sequence ID" value="XM_016624436.1"/>
</dbReference>
<dbReference type="SMR" id="P27666"/>
<dbReference type="STRING" id="4097.P27666"/>
<dbReference type="CAZy" id="GH17">
    <property type="family name" value="Glycoside Hydrolase Family 17"/>
</dbReference>
<dbReference type="PaxDb" id="4097-P27666"/>
<dbReference type="GeneID" id="107801151"/>
<dbReference type="KEGG" id="nta:107801151"/>
<dbReference type="OMA" id="RENAREW"/>
<dbReference type="OrthoDB" id="941679at2759"/>
<dbReference type="Proteomes" id="UP000084051">
    <property type="component" value="Unplaced"/>
</dbReference>
<dbReference type="GO" id="GO:0005773">
    <property type="term" value="C:vacuole"/>
    <property type="evidence" value="ECO:0007669"/>
    <property type="project" value="UniProtKB-SubCell"/>
</dbReference>
<dbReference type="GO" id="GO:0042973">
    <property type="term" value="F:glucan endo-1,3-beta-D-glucosidase activity"/>
    <property type="evidence" value="ECO:0007669"/>
    <property type="project" value="UniProtKB-EC"/>
</dbReference>
<dbReference type="GO" id="GO:0005975">
    <property type="term" value="P:carbohydrate metabolic process"/>
    <property type="evidence" value="ECO:0007669"/>
    <property type="project" value="InterPro"/>
</dbReference>
<dbReference type="GO" id="GO:0006952">
    <property type="term" value="P:defense response"/>
    <property type="evidence" value="ECO:0007669"/>
    <property type="project" value="UniProtKB-KW"/>
</dbReference>
<dbReference type="FunFam" id="3.20.20.80:FF:000010">
    <property type="entry name" value="glucan endo-1,3-beta-glucosidase, basic"/>
    <property type="match status" value="1"/>
</dbReference>
<dbReference type="Gene3D" id="3.20.20.80">
    <property type="entry name" value="Glycosidases"/>
    <property type="match status" value="1"/>
</dbReference>
<dbReference type="InterPro" id="IPR000490">
    <property type="entry name" value="Glyco_hydro_17"/>
</dbReference>
<dbReference type="InterPro" id="IPR044965">
    <property type="entry name" value="Glyco_hydro_17_plant"/>
</dbReference>
<dbReference type="InterPro" id="IPR017853">
    <property type="entry name" value="Glycoside_hydrolase_SF"/>
</dbReference>
<dbReference type="PANTHER" id="PTHR32227">
    <property type="entry name" value="GLUCAN ENDO-1,3-BETA-GLUCOSIDASE BG1-RELATED-RELATED"/>
    <property type="match status" value="1"/>
</dbReference>
<dbReference type="Pfam" id="PF00332">
    <property type="entry name" value="Glyco_hydro_17"/>
    <property type="match status" value="1"/>
</dbReference>
<dbReference type="SUPFAM" id="SSF51445">
    <property type="entry name" value="(Trans)glycosidases"/>
    <property type="match status" value="1"/>
</dbReference>
<dbReference type="PROSITE" id="PS00587">
    <property type="entry name" value="GLYCOSYL_HYDROL_F17"/>
    <property type="match status" value="1"/>
</dbReference>
<feature type="signal peptide">
    <location>
        <begin position="1"/>
        <end position="32"/>
    </location>
</feature>
<feature type="chain" id="PRO_0000011873" description="Glucan endo-1,3-beta-glucosidase, basic vacuolar isoform GLB">
    <location>
        <begin position="33"/>
        <end position="348"/>
    </location>
</feature>
<feature type="propeptide" id="PRO_0000011874" description="Removed in mature form" evidence="1">
    <location>
        <begin position="349"/>
        <end position="370"/>
    </location>
</feature>
<feature type="active site" description="Proton donor" evidence="2">
    <location>
        <position position="128"/>
    </location>
</feature>
<feature type="active site" description="Nucleophile" evidence="2">
    <location>
        <position position="273"/>
    </location>
</feature>
<feature type="modified residue" description="Pyrrolidone carboxylic acid" evidence="3">
    <location>
        <position position="33"/>
    </location>
</feature>
<feature type="glycosylation site" description="N-linked (GlcNAc...) asparagine" evidence="4">
    <location>
        <position position="361"/>
    </location>
</feature>
<keyword id="KW-0325">Glycoprotein</keyword>
<keyword id="KW-0326">Glycosidase</keyword>
<keyword id="KW-0378">Hydrolase</keyword>
<keyword id="KW-0611">Plant defense</keyword>
<keyword id="KW-0873">Pyrrolidone carboxylic acid</keyword>
<keyword id="KW-1185">Reference proteome</keyword>
<keyword id="KW-0732">Signal</keyword>
<keyword id="KW-0926">Vacuole</keyword>
<evidence type="ECO:0000250" key="1"/>
<evidence type="ECO:0000250" key="2">
    <source>
        <dbReference type="UniProtKB" id="O22317"/>
    </source>
</evidence>
<evidence type="ECO:0000250" key="3">
    <source>
        <dbReference type="UniProtKB" id="P15797"/>
    </source>
</evidence>
<evidence type="ECO:0000255" key="4"/>
<evidence type="ECO:0000305" key="5"/>
<comment type="function">
    <text>Implicated in the defense of plants against pathogens.</text>
</comment>
<comment type="catalytic activity">
    <reaction>
        <text>Hydrolysis of (1-&gt;3)-beta-D-glucosidic linkages in (1-&gt;3)-beta-D-glucans.</text>
        <dbReference type="EC" id="3.2.1.39"/>
    </reaction>
</comment>
<comment type="subcellular location">
    <subcellularLocation>
        <location>Vacuole</location>
    </subcellularLocation>
</comment>
<comment type="tissue specificity">
    <text>Is expressed primarily in epidermal cell of healthy plant, and following induction by ethylene, accumulates in mesophyll cells.</text>
</comment>
<comment type="induction">
    <text>By ethylene and salicylic acid.</text>
</comment>
<comment type="similarity">
    <text evidence="5">Belongs to the glycosyl hydrolase 17 family.</text>
</comment>
<name>E13F_TOBAC</name>
<reference key="1">
    <citation type="journal article" date="1991" name="Proc. Natl. Acad. Sci. U.S.A.">
        <title>Comparison of cloned genes provides evidence for intergenomic exchange of DNA in the evolution of a tobacco glucan endo-1,3-beta-glucosidase gene family.</title>
        <authorList>
            <person name="Sperisen C."/>
            <person name="Ryals J."/>
            <person name="Meins F."/>
        </authorList>
    </citation>
    <scope>NUCLEOTIDE SEQUENCE [GENOMIC DNA]</scope>
</reference>
<organism>
    <name type="scientific">Nicotiana tabacum</name>
    <name type="common">Common tobacco</name>
    <dbReference type="NCBI Taxonomy" id="4097"/>
    <lineage>
        <taxon>Eukaryota</taxon>
        <taxon>Viridiplantae</taxon>
        <taxon>Streptophyta</taxon>
        <taxon>Embryophyta</taxon>
        <taxon>Tracheophyta</taxon>
        <taxon>Spermatophyta</taxon>
        <taxon>Magnoliopsida</taxon>
        <taxon>eudicotyledons</taxon>
        <taxon>Gunneridae</taxon>
        <taxon>Pentapetalae</taxon>
        <taxon>asterids</taxon>
        <taxon>lamiids</taxon>
        <taxon>Solanales</taxon>
        <taxon>Solanaceae</taxon>
        <taxon>Nicotianoideae</taxon>
        <taxon>Nicotianeae</taxon>
        <taxon>Nicotiana</taxon>
    </lineage>
</organism>
<proteinExistence type="evidence at transcript level"/>
<accession>P27666</accession>
<sequence>MSTSDKHNTPQMAAITLLGLLLVASTIEIAGAQSIGVCYGMLGNNLPNHWEVIQLYKSRNIGRLRLYDPNHGALQALKGSNIEVMLGLPNSDVKHIASGMEHARWWVQKNVKDFWPDVKIKYIAVGNEISPVTGTSYLTSFLTPAMVNIYKAIGEAGLGNNIKVSTSVDMTLIGNSYPPSQGSFRNDARWFTDPIVGFLRDTRAPLLVNIYPYFSYSGNPGQISLPYSLFTAPNVVVQDGSRQYRNLFDAMLDSVYAALERSGGASVGIVVSESGWPSAGAFGATYDNAATYLRNLIQHAKEGSPRKPGPIETYIFAMFDENNKNPELEKHFGLFSPNKQPKYNLNFGVSGGVWDSSVETNATASLISEM</sequence>